<sequence length="152" mass="15524">MTVAISAAVQQLPHGQGLALPAYQSAHAAGLDLLAAVAPDAPLVLAPGTYALVPTGLTLALPPGYEAQVRPRSGLAARHGVTVLNAPGTIDADYRGEIGVLLINHGSQPFTVRRGERIAQMVVARVARVDLTVAASLETTERGSGGFGSTGR</sequence>
<protein>
    <recommendedName>
        <fullName evidence="1">Deoxyuridine 5'-triphosphate nucleotidohydrolase</fullName>
        <shortName evidence="1">dUTPase</shortName>
        <ecNumber evidence="1">3.6.1.23</ecNumber>
    </recommendedName>
    <alternativeName>
        <fullName evidence="1">dUTP pyrophosphatase</fullName>
    </alternativeName>
</protein>
<comment type="function">
    <text evidence="1">This enzyme is involved in nucleotide metabolism: it produces dUMP, the immediate precursor of thymidine nucleotides and it decreases the intracellular concentration of dUTP so that uracil cannot be incorporated into DNA.</text>
</comment>
<comment type="catalytic activity">
    <reaction evidence="1">
        <text>dUTP + H2O = dUMP + diphosphate + H(+)</text>
        <dbReference type="Rhea" id="RHEA:10248"/>
        <dbReference type="ChEBI" id="CHEBI:15377"/>
        <dbReference type="ChEBI" id="CHEBI:15378"/>
        <dbReference type="ChEBI" id="CHEBI:33019"/>
        <dbReference type="ChEBI" id="CHEBI:61555"/>
        <dbReference type="ChEBI" id="CHEBI:246422"/>
        <dbReference type="EC" id="3.6.1.23"/>
    </reaction>
</comment>
<comment type="cofactor">
    <cofactor evidence="1">
        <name>Mg(2+)</name>
        <dbReference type="ChEBI" id="CHEBI:18420"/>
    </cofactor>
</comment>
<comment type="pathway">
    <text evidence="1">Pyrimidine metabolism; dUMP biosynthesis; dUMP from dCTP (dUTP route): step 2/2.</text>
</comment>
<comment type="similarity">
    <text evidence="1">Belongs to the dUTPase family.</text>
</comment>
<proteinExistence type="inferred from homology"/>
<dbReference type="EC" id="3.6.1.23" evidence="1"/>
<dbReference type="EMBL" id="CP000301">
    <property type="protein sequence ID" value="ABD85956.1"/>
    <property type="molecule type" value="Genomic_DNA"/>
</dbReference>
<dbReference type="SMR" id="Q21CD0"/>
<dbReference type="STRING" id="316056.RPC_0381"/>
<dbReference type="KEGG" id="rpc:RPC_0381"/>
<dbReference type="eggNOG" id="COG0756">
    <property type="taxonomic scope" value="Bacteria"/>
</dbReference>
<dbReference type="HOGENOM" id="CLU_068508_1_2_5"/>
<dbReference type="OrthoDB" id="9809956at2"/>
<dbReference type="UniPathway" id="UPA00610">
    <property type="reaction ID" value="UER00666"/>
</dbReference>
<dbReference type="GO" id="GO:0004170">
    <property type="term" value="F:dUTP diphosphatase activity"/>
    <property type="evidence" value="ECO:0007669"/>
    <property type="project" value="UniProtKB-UniRule"/>
</dbReference>
<dbReference type="GO" id="GO:0000287">
    <property type="term" value="F:magnesium ion binding"/>
    <property type="evidence" value="ECO:0007669"/>
    <property type="project" value="UniProtKB-UniRule"/>
</dbReference>
<dbReference type="GO" id="GO:0006226">
    <property type="term" value="P:dUMP biosynthetic process"/>
    <property type="evidence" value="ECO:0007669"/>
    <property type="project" value="UniProtKB-UniRule"/>
</dbReference>
<dbReference type="GO" id="GO:0046081">
    <property type="term" value="P:dUTP catabolic process"/>
    <property type="evidence" value="ECO:0007669"/>
    <property type="project" value="InterPro"/>
</dbReference>
<dbReference type="CDD" id="cd07557">
    <property type="entry name" value="trimeric_dUTPase"/>
    <property type="match status" value="1"/>
</dbReference>
<dbReference type="Gene3D" id="2.70.40.10">
    <property type="match status" value="1"/>
</dbReference>
<dbReference type="HAMAP" id="MF_00116">
    <property type="entry name" value="dUTPase_bact"/>
    <property type="match status" value="1"/>
</dbReference>
<dbReference type="InterPro" id="IPR008181">
    <property type="entry name" value="dUTPase"/>
</dbReference>
<dbReference type="InterPro" id="IPR029054">
    <property type="entry name" value="dUTPase-like"/>
</dbReference>
<dbReference type="InterPro" id="IPR036157">
    <property type="entry name" value="dUTPase-like_sf"/>
</dbReference>
<dbReference type="InterPro" id="IPR033704">
    <property type="entry name" value="dUTPase_trimeric"/>
</dbReference>
<dbReference type="NCBIfam" id="TIGR00576">
    <property type="entry name" value="dut"/>
    <property type="match status" value="1"/>
</dbReference>
<dbReference type="NCBIfam" id="NF001862">
    <property type="entry name" value="PRK00601.1"/>
    <property type="match status" value="1"/>
</dbReference>
<dbReference type="PANTHER" id="PTHR11241">
    <property type="entry name" value="DEOXYURIDINE 5'-TRIPHOSPHATE NUCLEOTIDOHYDROLASE"/>
    <property type="match status" value="1"/>
</dbReference>
<dbReference type="PANTHER" id="PTHR11241:SF0">
    <property type="entry name" value="DEOXYURIDINE 5'-TRIPHOSPHATE NUCLEOTIDOHYDROLASE"/>
    <property type="match status" value="1"/>
</dbReference>
<dbReference type="Pfam" id="PF00692">
    <property type="entry name" value="dUTPase"/>
    <property type="match status" value="1"/>
</dbReference>
<dbReference type="SUPFAM" id="SSF51283">
    <property type="entry name" value="dUTPase-like"/>
    <property type="match status" value="1"/>
</dbReference>
<evidence type="ECO:0000255" key="1">
    <source>
        <dbReference type="HAMAP-Rule" id="MF_00116"/>
    </source>
</evidence>
<reference key="1">
    <citation type="submission" date="2006-03" db="EMBL/GenBank/DDBJ databases">
        <title>Complete sequence of Rhodopseudomonas palustris BisB18.</title>
        <authorList>
            <consortium name="US DOE Joint Genome Institute"/>
            <person name="Copeland A."/>
            <person name="Lucas S."/>
            <person name="Lapidus A."/>
            <person name="Barry K."/>
            <person name="Detter J.C."/>
            <person name="Glavina del Rio T."/>
            <person name="Hammon N."/>
            <person name="Israni S."/>
            <person name="Dalin E."/>
            <person name="Tice H."/>
            <person name="Pitluck S."/>
            <person name="Chain P."/>
            <person name="Malfatti S."/>
            <person name="Shin M."/>
            <person name="Vergez L."/>
            <person name="Schmutz J."/>
            <person name="Larimer F."/>
            <person name="Land M."/>
            <person name="Hauser L."/>
            <person name="Pelletier D.A."/>
            <person name="Kyrpides N."/>
            <person name="Anderson I."/>
            <person name="Oda Y."/>
            <person name="Harwood C.S."/>
            <person name="Richardson P."/>
        </authorList>
    </citation>
    <scope>NUCLEOTIDE SEQUENCE [LARGE SCALE GENOMIC DNA]</scope>
    <source>
        <strain>BisB18</strain>
    </source>
</reference>
<accession>Q21CD0</accession>
<organism>
    <name type="scientific">Rhodopseudomonas palustris (strain BisB18)</name>
    <dbReference type="NCBI Taxonomy" id="316056"/>
    <lineage>
        <taxon>Bacteria</taxon>
        <taxon>Pseudomonadati</taxon>
        <taxon>Pseudomonadota</taxon>
        <taxon>Alphaproteobacteria</taxon>
        <taxon>Hyphomicrobiales</taxon>
        <taxon>Nitrobacteraceae</taxon>
        <taxon>Rhodopseudomonas</taxon>
    </lineage>
</organism>
<gene>
    <name evidence="1" type="primary">dut</name>
    <name type="ordered locus">RPC_0381</name>
</gene>
<name>DUT_RHOPB</name>
<keyword id="KW-0378">Hydrolase</keyword>
<keyword id="KW-0460">Magnesium</keyword>
<keyword id="KW-0479">Metal-binding</keyword>
<keyword id="KW-0546">Nucleotide metabolism</keyword>
<feature type="chain" id="PRO_1000015504" description="Deoxyuridine 5'-triphosphate nucleotidohydrolase">
    <location>
        <begin position="1"/>
        <end position="152"/>
    </location>
</feature>
<feature type="binding site" evidence="1">
    <location>
        <begin position="72"/>
        <end position="74"/>
    </location>
    <ligand>
        <name>substrate</name>
    </ligand>
</feature>
<feature type="binding site" evidence="1">
    <location>
        <position position="85"/>
    </location>
    <ligand>
        <name>substrate</name>
    </ligand>
</feature>
<feature type="binding site" evidence="1">
    <location>
        <begin position="89"/>
        <end position="91"/>
    </location>
    <ligand>
        <name>substrate</name>
    </ligand>
</feature>